<sequence>MAKEKFQRTKPHVNIGTIGHVDHGKTTLTAAITGVLAQKGLSEMKDYDNIDNAPEEKERGITINTSHVEYETENRHYAHVDCPGHADYVKNMITGAAQMDGAILVVAATDGPMPQTREHILLSRQVGVPAIVVFLNKMDMVDDEELLELVEMEVRELLSEYEFDGDNAPVVAGSALKALEEVKAGQLGEWSEKILELMAAVDEYIPTPERDTEKDFLMPIEDVFSISGRGTVVTGRIERGTLHLNDDVDIVGFKPTVTTKVTGIEMFRKEMDEAQAGDNVGVLLRGIKKDEVERGQVLAKPGSITPHTKFEAEVYALTKEEGGRHKPFFNGYRPQFYIRTTDVTGSVILPEGVEMVMPGDNVKLTVELIAPIALEEGTRFAIREGGRTVGAGVVTKIIE</sequence>
<dbReference type="EC" id="3.6.5.3" evidence="2"/>
<dbReference type="EMBL" id="CP001279">
    <property type="protein sequence ID" value="ACM93337.1"/>
    <property type="molecule type" value="Genomic_DNA"/>
</dbReference>
<dbReference type="RefSeq" id="WP_015902389.1">
    <property type="nucleotide sequence ID" value="NC_012115.1"/>
</dbReference>
<dbReference type="SMR" id="B9L7I8"/>
<dbReference type="STRING" id="598659.NAMH_0170"/>
<dbReference type="KEGG" id="nam:NAMH_0170"/>
<dbReference type="eggNOG" id="COG0050">
    <property type="taxonomic scope" value="Bacteria"/>
</dbReference>
<dbReference type="HOGENOM" id="CLU_007265_0_1_7"/>
<dbReference type="OrthoDB" id="9803139at2"/>
<dbReference type="Proteomes" id="UP000000448">
    <property type="component" value="Chromosome"/>
</dbReference>
<dbReference type="GO" id="GO:0005829">
    <property type="term" value="C:cytosol"/>
    <property type="evidence" value="ECO:0007669"/>
    <property type="project" value="TreeGrafter"/>
</dbReference>
<dbReference type="GO" id="GO:0005525">
    <property type="term" value="F:GTP binding"/>
    <property type="evidence" value="ECO:0007669"/>
    <property type="project" value="UniProtKB-UniRule"/>
</dbReference>
<dbReference type="GO" id="GO:0003924">
    <property type="term" value="F:GTPase activity"/>
    <property type="evidence" value="ECO:0007669"/>
    <property type="project" value="InterPro"/>
</dbReference>
<dbReference type="GO" id="GO:0003746">
    <property type="term" value="F:translation elongation factor activity"/>
    <property type="evidence" value="ECO:0007669"/>
    <property type="project" value="UniProtKB-UniRule"/>
</dbReference>
<dbReference type="CDD" id="cd01884">
    <property type="entry name" value="EF_Tu"/>
    <property type="match status" value="1"/>
</dbReference>
<dbReference type="CDD" id="cd03697">
    <property type="entry name" value="EFTU_II"/>
    <property type="match status" value="1"/>
</dbReference>
<dbReference type="CDD" id="cd03707">
    <property type="entry name" value="EFTU_III"/>
    <property type="match status" value="1"/>
</dbReference>
<dbReference type="FunFam" id="2.40.30.10:FF:000001">
    <property type="entry name" value="Elongation factor Tu"/>
    <property type="match status" value="1"/>
</dbReference>
<dbReference type="FunFam" id="3.40.50.300:FF:000003">
    <property type="entry name" value="Elongation factor Tu"/>
    <property type="match status" value="1"/>
</dbReference>
<dbReference type="Gene3D" id="3.40.50.300">
    <property type="entry name" value="P-loop containing nucleotide triphosphate hydrolases"/>
    <property type="match status" value="1"/>
</dbReference>
<dbReference type="Gene3D" id="2.40.30.10">
    <property type="entry name" value="Translation factors"/>
    <property type="match status" value="2"/>
</dbReference>
<dbReference type="HAMAP" id="MF_00118_B">
    <property type="entry name" value="EF_Tu_B"/>
    <property type="match status" value="1"/>
</dbReference>
<dbReference type="InterPro" id="IPR041709">
    <property type="entry name" value="EF-Tu_GTP-bd"/>
</dbReference>
<dbReference type="InterPro" id="IPR050055">
    <property type="entry name" value="EF-Tu_GTPase"/>
</dbReference>
<dbReference type="InterPro" id="IPR004161">
    <property type="entry name" value="EFTu-like_2"/>
</dbReference>
<dbReference type="InterPro" id="IPR033720">
    <property type="entry name" value="EFTU_2"/>
</dbReference>
<dbReference type="InterPro" id="IPR031157">
    <property type="entry name" value="G_TR_CS"/>
</dbReference>
<dbReference type="InterPro" id="IPR027417">
    <property type="entry name" value="P-loop_NTPase"/>
</dbReference>
<dbReference type="InterPro" id="IPR005225">
    <property type="entry name" value="Small_GTP-bd"/>
</dbReference>
<dbReference type="InterPro" id="IPR000795">
    <property type="entry name" value="T_Tr_GTP-bd_dom"/>
</dbReference>
<dbReference type="InterPro" id="IPR009000">
    <property type="entry name" value="Transl_B-barrel_sf"/>
</dbReference>
<dbReference type="InterPro" id="IPR009001">
    <property type="entry name" value="Transl_elong_EF1A/Init_IF2_C"/>
</dbReference>
<dbReference type="InterPro" id="IPR004541">
    <property type="entry name" value="Transl_elong_EFTu/EF1A_bac/org"/>
</dbReference>
<dbReference type="InterPro" id="IPR004160">
    <property type="entry name" value="Transl_elong_EFTu/EF1A_C"/>
</dbReference>
<dbReference type="NCBIfam" id="TIGR00485">
    <property type="entry name" value="EF-Tu"/>
    <property type="match status" value="1"/>
</dbReference>
<dbReference type="NCBIfam" id="NF000766">
    <property type="entry name" value="PRK00049.1"/>
    <property type="match status" value="1"/>
</dbReference>
<dbReference type="NCBIfam" id="NF009372">
    <property type="entry name" value="PRK12735.1"/>
    <property type="match status" value="1"/>
</dbReference>
<dbReference type="NCBIfam" id="NF009373">
    <property type="entry name" value="PRK12736.1"/>
    <property type="match status" value="1"/>
</dbReference>
<dbReference type="NCBIfam" id="TIGR00231">
    <property type="entry name" value="small_GTP"/>
    <property type="match status" value="1"/>
</dbReference>
<dbReference type="PANTHER" id="PTHR43721:SF22">
    <property type="entry name" value="ELONGATION FACTOR TU, MITOCHONDRIAL"/>
    <property type="match status" value="1"/>
</dbReference>
<dbReference type="PANTHER" id="PTHR43721">
    <property type="entry name" value="ELONGATION FACTOR TU-RELATED"/>
    <property type="match status" value="1"/>
</dbReference>
<dbReference type="Pfam" id="PF00009">
    <property type="entry name" value="GTP_EFTU"/>
    <property type="match status" value="1"/>
</dbReference>
<dbReference type="Pfam" id="PF03144">
    <property type="entry name" value="GTP_EFTU_D2"/>
    <property type="match status" value="1"/>
</dbReference>
<dbReference type="Pfam" id="PF03143">
    <property type="entry name" value="GTP_EFTU_D3"/>
    <property type="match status" value="1"/>
</dbReference>
<dbReference type="PRINTS" id="PR00315">
    <property type="entry name" value="ELONGATNFCT"/>
</dbReference>
<dbReference type="SUPFAM" id="SSF50465">
    <property type="entry name" value="EF-Tu/eEF-1alpha/eIF2-gamma C-terminal domain"/>
    <property type="match status" value="1"/>
</dbReference>
<dbReference type="SUPFAM" id="SSF52540">
    <property type="entry name" value="P-loop containing nucleoside triphosphate hydrolases"/>
    <property type="match status" value="1"/>
</dbReference>
<dbReference type="SUPFAM" id="SSF50447">
    <property type="entry name" value="Translation proteins"/>
    <property type="match status" value="1"/>
</dbReference>
<dbReference type="PROSITE" id="PS00301">
    <property type="entry name" value="G_TR_1"/>
    <property type="match status" value="1"/>
</dbReference>
<dbReference type="PROSITE" id="PS51722">
    <property type="entry name" value="G_TR_2"/>
    <property type="match status" value="1"/>
</dbReference>
<proteinExistence type="inferred from homology"/>
<organism>
    <name type="scientific">Nautilia profundicola (strain ATCC BAA-1463 / DSM 18972 / AmH)</name>
    <dbReference type="NCBI Taxonomy" id="598659"/>
    <lineage>
        <taxon>Bacteria</taxon>
        <taxon>Pseudomonadati</taxon>
        <taxon>Campylobacterota</taxon>
        <taxon>Epsilonproteobacteria</taxon>
        <taxon>Nautiliales</taxon>
        <taxon>Nautiliaceae</taxon>
        <taxon>Nautilia</taxon>
    </lineage>
</organism>
<accession>B9L7I8</accession>
<keyword id="KW-0963">Cytoplasm</keyword>
<keyword id="KW-0251">Elongation factor</keyword>
<keyword id="KW-0342">GTP-binding</keyword>
<keyword id="KW-0378">Hydrolase</keyword>
<keyword id="KW-0460">Magnesium</keyword>
<keyword id="KW-0479">Metal-binding</keyword>
<keyword id="KW-0547">Nucleotide-binding</keyword>
<keyword id="KW-0648">Protein biosynthesis</keyword>
<evidence type="ECO:0000250" key="1"/>
<evidence type="ECO:0000255" key="2">
    <source>
        <dbReference type="HAMAP-Rule" id="MF_00118"/>
    </source>
</evidence>
<gene>
    <name evidence="2" type="primary">tuf</name>
    <name type="ordered locus">NAMH_0170</name>
</gene>
<reference key="1">
    <citation type="journal article" date="2009" name="PLoS Genet.">
        <title>Adaptations to submarine hydrothermal environments exemplified by the genome of Nautilia profundicola.</title>
        <authorList>
            <person name="Campbell B.J."/>
            <person name="Smith J.L."/>
            <person name="Hanson T.E."/>
            <person name="Klotz M.G."/>
            <person name="Stein L.Y."/>
            <person name="Lee C.K."/>
            <person name="Wu D."/>
            <person name="Robinson J.M."/>
            <person name="Khouri H.M."/>
            <person name="Eisen J.A."/>
            <person name="Cary S.C."/>
        </authorList>
    </citation>
    <scope>NUCLEOTIDE SEQUENCE [LARGE SCALE GENOMIC DNA]</scope>
    <source>
        <strain>ATCC BAA-1463 / DSM 18972 / AmH</strain>
    </source>
</reference>
<comment type="function">
    <text evidence="2">GTP hydrolase that promotes the GTP-dependent binding of aminoacyl-tRNA to the A-site of ribosomes during protein biosynthesis.</text>
</comment>
<comment type="catalytic activity">
    <reaction evidence="2">
        <text>GTP + H2O = GDP + phosphate + H(+)</text>
        <dbReference type="Rhea" id="RHEA:19669"/>
        <dbReference type="ChEBI" id="CHEBI:15377"/>
        <dbReference type="ChEBI" id="CHEBI:15378"/>
        <dbReference type="ChEBI" id="CHEBI:37565"/>
        <dbReference type="ChEBI" id="CHEBI:43474"/>
        <dbReference type="ChEBI" id="CHEBI:58189"/>
        <dbReference type="EC" id="3.6.5.3"/>
    </reaction>
    <physiologicalReaction direction="left-to-right" evidence="2">
        <dbReference type="Rhea" id="RHEA:19670"/>
    </physiologicalReaction>
</comment>
<comment type="subunit">
    <text evidence="2">Monomer.</text>
</comment>
<comment type="subcellular location">
    <subcellularLocation>
        <location evidence="2">Cytoplasm</location>
    </subcellularLocation>
</comment>
<comment type="similarity">
    <text evidence="2">Belongs to the TRAFAC class translation factor GTPase superfamily. Classic translation factor GTPase family. EF-Tu/EF-1A subfamily.</text>
</comment>
<feature type="chain" id="PRO_1000201409" description="Elongation factor Tu">
    <location>
        <begin position="1"/>
        <end position="399"/>
    </location>
</feature>
<feature type="domain" description="tr-type G">
    <location>
        <begin position="10"/>
        <end position="209"/>
    </location>
</feature>
<feature type="region of interest" description="G1" evidence="1">
    <location>
        <begin position="19"/>
        <end position="26"/>
    </location>
</feature>
<feature type="region of interest" description="G2" evidence="1">
    <location>
        <begin position="60"/>
        <end position="64"/>
    </location>
</feature>
<feature type="region of interest" description="G3" evidence="1">
    <location>
        <begin position="81"/>
        <end position="84"/>
    </location>
</feature>
<feature type="region of interest" description="G4" evidence="1">
    <location>
        <begin position="136"/>
        <end position="139"/>
    </location>
</feature>
<feature type="region of interest" description="G5" evidence="1">
    <location>
        <begin position="174"/>
        <end position="176"/>
    </location>
</feature>
<feature type="binding site" evidence="2">
    <location>
        <begin position="19"/>
        <end position="26"/>
    </location>
    <ligand>
        <name>GTP</name>
        <dbReference type="ChEBI" id="CHEBI:37565"/>
    </ligand>
</feature>
<feature type="binding site" evidence="2">
    <location>
        <position position="26"/>
    </location>
    <ligand>
        <name>Mg(2+)</name>
        <dbReference type="ChEBI" id="CHEBI:18420"/>
    </ligand>
</feature>
<feature type="binding site" evidence="2">
    <location>
        <begin position="81"/>
        <end position="85"/>
    </location>
    <ligand>
        <name>GTP</name>
        <dbReference type="ChEBI" id="CHEBI:37565"/>
    </ligand>
</feature>
<feature type="binding site" evidence="2">
    <location>
        <begin position="136"/>
        <end position="139"/>
    </location>
    <ligand>
        <name>GTP</name>
        <dbReference type="ChEBI" id="CHEBI:37565"/>
    </ligand>
</feature>
<protein>
    <recommendedName>
        <fullName evidence="2">Elongation factor Tu</fullName>
        <shortName evidence="2">EF-Tu</shortName>
        <ecNumber evidence="2">3.6.5.3</ecNumber>
    </recommendedName>
</protein>
<name>EFTU_NAUPA</name>